<organism>
    <name type="scientific">Pseudomonas aeruginosa (strain ATCC 15692 / DSM 22644 / CIP 104116 / JCM 14847 / LMG 12228 / 1C / PRS 101 / PAO1)</name>
    <dbReference type="NCBI Taxonomy" id="208964"/>
    <lineage>
        <taxon>Bacteria</taxon>
        <taxon>Pseudomonadati</taxon>
        <taxon>Pseudomonadota</taxon>
        <taxon>Gammaproteobacteria</taxon>
        <taxon>Pseudomonadales</taxon>
        <taxon>Pseudomonadaceae</taxon>
        <taxon>Pseudomonas</taxon>
    </lineage>
</organism>
<gene>
    <name type="primary">cobN</name>
    <name type="ordered locus">PA2944</name>
</gene>
<comment type="function">
    <text evidence="1">Catalyzes cobalt insertion in the corrin ring.</text>
</comment>
<comment type="catalytic activity">
    <reaction>
        <text>hydrogenobyrinate a,c-diamide + Co(2+) + ATP + H2O = cob(II)yrinate a,c diamide + ADP + phosphate + 5 H(+)</text>
        <dbReference type="Rhea" id="RHEA:15341"/>
        <dbReference type="ChEBI" id="CHEBI:15377"/>
        <dbReference type="ChEBI" id="CHEBI:15378"/>
        <dbReference type="ChEBI" id="CHEBI:30616"/>
        <dbReference type="ChEBI" id="CHEBI:43474"/>
        <dbReference type="ChEBI" id="CHEBI:48828"/>
        <dbReference type="ChEBI" id="CHEBI:58537"/>
        <dbReference type="ChEBI" id="CHEBI:77874"/>
        <dbReference type="ChEBI" id="CHEBI:456216"/>
        <dbReference type="EC" id="6.6.1.2"/>
    </reaction>
</comment>
<comment type="pathway">
    <text>Cofactor biosynthesis; adenosylcobalamin biosynthesis; cob(II)yrinate a,c-diamide from precorrin-2 (aerobic route): step 10/10.</text>
</comment>
<comment type="subunit">
    <text evidence="1">Heterotrimer of CobN, CobS and CobT.</text>
</comment>
<comment type="subcellular location">
    <subcellularLocation>
        <location evidence="2">Cytoplasm</location>
    </subcellularLocation>
</comment>
<comment type="similarity">
    <text evidence="2">Belongs to the CobN family.</text>
</comment>
<evidence type="ECO:0000250" key="1"/>
<evidence type="ECO:0000305" key="2"/>
<name>COBN_PSEAE</name>
<dbReference type="EC" id="6.6.1.2"/>
<dbReference type="EMBL" id="AE004091">
    <property type="protein sequence ID" value="AAG06332.1"/>
    <property type="molecule type" value="Genomic_DNA"/>
</dbReference>
<dbReference type="PIR" id="G83278">
    <property type="entry name" value="G83278"/>
</dbReference>
<dbReference type="RefSeq" id="NP_251634.1">
    <property type="nucleotide sequence ID" value="NC_002516.2"/>
</dbReference>
<dbReference type="RefSeq" id="WP_003113999.1">
    <property type="nucleotide sequence ID" value="NZ_QZGE01000009.1"/>
</dbReference>
<dbReference type="SMR" id="Q9HZQ3"/>
<dbReference type="STRING" id="208964.PA2944"/>
<dbReference type="PaxDb" id="208964-PA2944"/>
<dbReference type="GeneID" id="882831"/>
<dbReference type="KEGG" id="pae:PA2944"/>
<dbReference type="PATRIC" id="fig|208964.12.peg.3088"/>
<dbReference type="PseudoCAP" id="PA2944"/>
<dbReference type="HOGENOM" id="CLU_002017_1_0_6"/>
<dbReference type="InParanoid" id="Q9HZQ3"/>
<dbReference type="OrthoDB" id="9757976at2"/>
<dbReference type="PhylomeDB" id="Q9HZQ3"/>
<dbReference type="BioCyc" id="PAER208964:G1FZ6-2995-MONOMER"/>
<dbReference type="BRENDA" id="6.6.1.2">
    <property type="organism ID" value="5114"/>
</dbReference>
<dbReference type="UniPathway" id="UPA00148">
    <property type="reaction ID" value="UER00221"/>
</dbReference>
<dbReference type="Proteomes" id="UP000002438">
    <property type="component" value="Chromosome"/>
</dbReference>
<dbReference type="GO" id="GO:0005737">
    <property type="term" value="C:cytoplasm"/>
    <property type="evidence" value="ECO:0007669"/>
    <property type="project" value="UniProtKB-SubCell"/>
</dbReference>
<dbReference type="GO" id="GO:0005524">
    <property type="term" value="F:ATP binding"/>
    <property type="evidence" value="ECO:0007669"/>
    <property type="project" value="UniProtKB-KW"/>
</dbReference>
<dbReference type="GO" id="GO:0051116">
    <property type="term" value="F:cobaltochelatase activity"/>
    <property type="evidence" value="ECO:0007669"/>
    <property type="project" value="UniProtKB-EC"/>
</dbReference>
<dbReference type="GO" id="GO:0009236">
    <property type="term" value="P:cobalamin biosynthetic process"/>
    <property type="evidence" value="ECO:0007669"/>
    <property type="project" value="UniProtKB-UniPathway"/>
</dbReference>
<dbReference type="GO" id="GO:0006779">
    <property type="term" value="P:porphyrin-containing compound biosynthetic process"/>
    <property type="evidence" value="ECO:0007669"/>
    <property type="project" value="UniProtKB-KW"/>
</dbReference>
<dbReference type="CDD" id="cd10150">
    <property type="entry name" value="CobN_like"/>
    <property type="match status" value="1"/>
</dbReference>
<dbReference type="InterPro" id="IPR011953">
    <property type="entry name" value="Cobalto_CobN"/>
</dbReference>
<dbReference type="InterPro" id="IPR003672">
    <property type="entry name" value="CobN/Mg_chltase"/>
</dbReference>
<dbReference type="NCBIfam" id="TIGR02257">
    <property type="entry name" value="cobalto_cobN"/>
    <property type="match status" value="1"/>
</dbReference>
<dbReference type="PANTHER" id="PTHR44119:SF4">
    <property type="entry name" value="AEROBIC COBALTOCHELATASE SUBUNIT COBN"/>
    <property type="match status" value="1"/>
</dbReference>
<dbReference type="PANTHER" id="PTHR44119">
    <property type="entry name" value="MAGNESIUM-CHELATASE SUBUNIT CHLH, CHLOROPLASTIC"/>
    <property type="match status" value="1"/>
</dbReference>
<dbReference type="Pfam" id="PF02514">
    <property type="entry name" value="CobN-Mg_chel"/>
    <property type="match status" value="1"/>
</dbReference>
<feature type="chain" id="PRO_0000287787" description="Aerobic cobaltochelatase subunit CobN">
    <location>
        <begin position="1"/>
        <end position="1248"/>
    </location>
</feature>
<sequence>MHLLRTQPGGFVPDDGIAHLAQTPAELVILCSGDSHLALLAEAARALPDDYPSLRLANPMQLQNHASVDLYVEEVLRHARVILLSLHGGIGYWRYGVEQLVALAERGALLIPVPGDDRPDPELSALGNLPAEQAERFWQYLRQGGLENAGQFYRCLASQCLGRDYAWREPQALPRVALFHPRHAEATLEHWRADWQAGRPVVALLFYRTHLQAANTAFIARFCERLAAQGLNPLPIALASLKESACLAQVEDWLERSDAALIVNTTGFAQSNPEAPELRPFRRDVPVLQAICSLDNRPLWLDNPQGLGPRDLAMHVALPELDGRIVTRPISFKGLAWRSERSESDVVCYLADDERMDFVAELARRWAELARKPNAEKRVALVLANYPTRDGRIGNGVGLDTPAAALNILRALRQQGYPVDGLPASGTELIRQLLGGVSNDLEHLDLRPCAQSLALDDYLACFARLPERNRQAVLARWGEPQQDPMFRDGRMMVAGLRYGLTFVGIQPARGYQLDPAAVYHDPDLVPPHGYLAFYFWLRHAYRADALLHVGKHGNLEWLPGKGVGLSAECWPDALLGPLPNIYPFIVNDPGEGAQAKRRTQAVIIDHLMPPLTRAESYGPLRDLERLADEFYDASLLDPRRAEQLRGEILVLLRDNRLDREIGLQLSDDPDSWLPQLDAYLCDLKESQIRDGLHVFGESPSGRLRLDTLLALLRVPRGDGKGANAGLLKSLADDLGLGFDPLACDMGEAWQGARPACLEERGGEPWRTLGDTRERLELLALHWIERCLGGESPPATWRASGEVLRGLCEQVAPTLDACGGAEIDGLLAALEGRFVPAGPSGAPSRGRLDVLPTGRNFFSVDVRNLPTPTAWRIGFQSANLLLERHLQEHGDHLRQLGLSVWGTATMRTGGDDIAQALALLGVRPVWQAGSQRVADFEILPVSLLDRPRVDVTLRVSGFFRDAFANLIRLFDAAVQAVAELDEAEELNPLAARVRLERQRLEAQGTAPAEARRQAGWRIFGAKPGAYGAGVQGAIEERLWETRADLAEVYLNWGGYAYGAADDGTPARERFAQRLERLQAVLHNQDNREHDLLDSNDYYQFQGGMLAAVETLRGAPVASYHGDHSQPDNPRIRTLKEELNRVVRARAVNPKWIAGMKRHGYKGAFELAATVDYLCAFDATSELIDDHQYALLADAYLLDAETREFVRQHNPQALRDMAERLVEAQRRGLWQEPGAYREALENLLLDVEEE</sequence>
<proteinExistence type="inferred from homology"/>
<accession>Q9HZQ3</accession>
<reference key="1">
    <citation type="journal article" date="2000" name="Nature">
        <title>Complete genome sequence of Pseudomonas aeruginosa PAO1, an opportunistic pathogen.</title>
        <authorList>
            <person name="Stover C.K."/>
            <person name="Pham X.-Q.T."/>
            <person name="Erwin A.L."/>
            <person name="Mizoguchi S.D."/>
            <person name="Warrener P."/>
            <person name="Hickey M.J."/>
            <person name="Brinkman F.S.L."/>
            <person name="Hufnagle W.O."/>
            <person name="Kowalik D.J."/>
            <person name="Lagrou M."/>
            <person name="Garber R.L."/>
            <person name="Goltry L."/>
            <person name="Tolentino E."/>
            <person name="Westbrock-Wadman S."/>
            <person name="Yuan Y."/>
            <person name="Brody L.L."/>
            <person name="Coulter S.N."/>
            <person name="Folger K.R."/>
            <person name="Kas A."/>
            <person name="Larbig K."/>
            <person name="Lim R.M."/>
            <person name="Smith K.A."/>
            <person name="Spencer D.H."/>
            <person name="Wong G.K.-S."/>
            <person name="Wu Z."/>
            <person name="Paulsen I.T."/>
            <person name="Reizer J."/>
            <person name="Saier M.H. Jr."/>
            <person name="Hancock R.E.W."/>
            <person name="Lory S."/>
            <person name="Olson M.V."/>
        </authorList>
    </citation>
    <scope>NUCLEOTIDE SEQUENCE [LARGE SCALE GENOMIC DNA]</scope>
    <source>
        <strain>ATCC 15692 / DSM 22644 / CIP 104116 / JCM 14847 / LMG 12228 / 1C / PRS 101 / PAO1</strain>
    </source>
</reference>
<keyword id="KW-0067">ATP-binding</keyword>
<keyword id="KW-0169">Cobalamin biosynthesis</keyword>
<keyword id="KW-0963">Cytoplasm</keyword>
<keyword id="KW-0436">Ligase</keyword>
<keyword id="KW-0547">Nucleotide-binding</keyword>
<keyword id="KW-0627">Porphyrin biosynthesis</keyword>
<keyword id="KW-1185">Reference proteome</keyword>
<protein>
    <recommendedName>
        <fullName>Aerobic cobaltochelatase subunit CobN</fullName>
        <ecNumber>6.6.1.2</ecNumber>
    </recommendedName>
    <alternativeName>
        <fullName>Hydrogenobyrinic acid a,c-diamide cobaltochelatase subunit CobN</fullName>
    </alternativeName>
</protein>